<gene>
    <name evidence="1" type="primary">rpsR</name>
    <name type="ordered locus">ckrop_0479</name>
</gene>
<evidence type="ECO:0000255" key="1">
    <source>
        <dbReference type="HAMAP-Rule" id="MF_00270"/>
    </source>
</evidence>
<evidence type="ECO:0000256" key="2">
    <source>
        <dbReference type="SAM" id="MobiDB-lite"/>
    </source>
</evidence>
<evidence type="ECO:0000305" key="3"/>
<keyword id="KW-1185">Reference proteome</keyword>
<keyword id="KW-0687">Ribonucleoprotein</keyword>
<keyword id="KW-0689">Ribosomal protein</keyword>
<keyword id="KW-0694">RNA-binding</keyword>
<keyword id="KW-0699">rRNA-binding</keyword>
<organism>
    <name type="scientific">Corynebacterium kroppenstedtii (strain DSM 44385 / JCM 11950 / CIP 105744 / CCUG 35717)</name>
    <dbReference type="NCBI Taxonomy" id="645127"/>
    <lineage>
        <taxon>Bacteria</taxon>
        <taxon>Bacillati</taxon>
        <taxon>Actinomycetota</taxon>
        <taxon>Actinomycetes</taxon>
        <taxon>Mycobacteriales</taxon>
        <taxon>Corynebacteriaceae</taxon>
        <taxon>Corynebacterium</taxon>
    </lineage>
</organism>
<protein>
    <recommendedName>
        <fullName evidence="1">Small ribosomal subunit protein bS18</fullName>
    </recommendedName>
    <alternativeName>
        <fullName evidence="3">30S ribosomal protein S18</fullName>
    </alternativeName>
</protein>
<accession>C4LHF0</accession>
<sequence length="82" mass="9519">MKRNNSKKVRVEPTRRPKKNPLKARGIEAVDYKDIETLRTFISERGKIRSRRVTGLTPQQQRQVATAVKNAREMALLPFTSR</sequence>
<proteinExistence type="inferred from homology"/>
<comment type="function">
    <text evidence="1">Binds as a heterodimer with protein bS6 to the central domain of the 16S rRNA, where it helps stabilize the platform of the 30S subunit.</text>
</comment>
<comment type="subunit">
    <text evidence="1">Part of the 30S ribosomal subunit. Forms a tight heterodimer with protein bS6.</text>
</comment>
<comment type="similarity">
    <text evidence="1">Belongs to the bacterial ribosomal protein bS18 family.</text>
</comment>
<dbReference type="EMBL" id="CP001620">
    <property type="protein sequence ID" value="ACR17255.1"/>
    <property type="molecule type" value="Genomic_DNA"/>
</dbReference>
<dbReference type="RefSeq" id="WP_012731143.1">
    <property type="nucleotide sequence ID" value="NC_012704.1"/>
</dbReference>
<dbReference type="SMR" id="C4LHF0"/>
<dbReference type="STRING" id="645127.ckrop_0479"/>
<dbReference type="GeneID" id="92727065"/>
<dbReference type="KEGG" id="ckp:ckrop_0479"/>
<dbReference type="eggNOG" id="COG0238">
    <property type="taxonomic scope" value="Bacteria"/>
</dbReference>
<dbReference type="HOGENOM" id="CLU_148710_1_0_11"/>
<dbReference type="OrthoDB" id="9812008at2"/>
<dbReference type="Proteomes" id="UP000001473">
    <property type="component" value="Chromosome"/>
</dbReference>
<dbReference type="GO" id="GO:0022627">
    <property type="term" value="C:cytosolic small ribosomal subunit"/>
    <property type="evidence" value="ECO:0007669"/>
    <property type="project" value="TreeGrafter"/>
</dbReference>
<dbReference type="GO" id="GO:0070181">
    <property type="term" value="F:small ribosomal subunit rRNA binding"/>
    <property type="evidence" value="ECO:0007669"/>
    <property type="project" value="TreeGrafter"/>
</dbReference>
<dbReference type="GO" id="GO:0003735">
    <property type="term" value="F:structural constituent of ribosome"/>
    <property type="evidence" value="ECO:0007669"/>
    <property type="project" value="InterPro"/>
</dbReference>
<dbReference type="GO" id="GO:0006412">
    <property type="term" value="P:translation"/>
    <property type="evidence" value="ECO:0007669"/>
    <property type="project" value="UniProtKB-UniRule"/>
</dbReference>
<dbReference type="FunFam" id="4.10.640.10:FF:000016">
    <property type="entry name" value="30S ribosomal protein S18"/>
    <property type="match status" value="1"/>
</dbReference>
<dbReference type="Gene3D" id="4.10.640.10">
    <property type="entry name" value="Ribosomal protein S18"/>
    <property type="match status" value="1"/>
</dbReference>
<dbReference type="HAMAP" id="MF_00270">
    <property type="entry name" value="Ribosomal_bS18"/>
    <property type="match status" value="1"/>
</dbReference>
<dbReference type="InterPro" id="IPR001648">
    <property type="entry name" value="Ribosomal_bS18"/>
</dbReference>
<dbReference type="InterPro" id="IPR018275">
    <property type="entry name" value="Ribosomal_bS18_CS"/>
</dbReference>
<dbReference type="InterPro" id="IPR036870">
    <property type="entry name" value="Ribosomal_bS18_sf"/>
</dbReference>
<dbReference type="NCBIfam" id="TIGR00165">
    <property type="entry name" value="S18"/>
    <property type="match status" value="1"/>
</dbReference>
<dbReference type="PANTHER" id="PTHR13479">
    <property type="entry name" value="30S RIBOSOMAL PROTEIN S18"/>
    <property type="match status" value="1"/>
</dbReference>
<dbReference type="PANTHER" id="PTHR13479:SF40">
    <property type="entry name" value="SMALL RIBOSOMAL SUBUNIT PROTEIN BS18M"/>
    <property type="match status" value="1"/>
</dbReference>
<dbReference type="Pfam" id="PF01084">
    <property type="entry name" value="Ribosomal_S18"/>
    <property type="match status" value="1"/>
</dbReference>
<dbReference type="PRINTS" id="PR00974">
    <property type="entry name" value="RIBOSOMALS18"/>
</dbReference>
<dbReference type="SUPFAM" id="SSF46911">
    <property type="entry name" value="Ribosomal protein S18"/>
    <property type="match status" value="1"/>
</dbReference>
<dbReference type="PROSITE" id="PS00057">
    <property type="entry name" value="RIBOSOMAL_S18"/>
    <property type="match status" value="1"/>
</dbReference>
<feature type="chain" id="PRO_1000204722" description="Small ribosomal subunit protein bS18">
    <location>
        <begin position="1"/>
        <end position="82"/>
    </location>
</feature>
<feature type="region of interest" description="Disordered" evidence="2">
    <location>
        <begin position="1"/>
        <end position="21"/>
    </location>
</feature>
<name>RS18_CORK4</name>
<reference key="1">
    <citation type="journal article" date="2008" name="J. Biotechnol.">
        <title>Ultrafast pyrosequencing of Corynebacterium kroppenstedtii DSM44385 revealed insights into the physiology of a lipophilic corynebacterium that lacks mycolic acids.</title>
        <authorList>
            <person name="Tauch A."/>
            <person name="Schneider J."/>
            <person name="Szczepanowski R."/>
            <person name="Tilker A."/>
            <person name="Viehoever P."/>
            <person name="Gartemann K.-H."/>
            <person name="Arnold W."/>
            <person name="Blom J."/>
            <person name="Brinkrolf K."/>
            <person name="Brune I."/>
            <person name="Goetker S."/>
            <person name="Weisshaar B."/>
            <person name="Goesmann A."/>
            <person name="Droege M."/>
            <person name="Puehler A."/>
        </authorList>
    </citation>
    <scope>NUCLEOTIDE SEQUENCE [LARGE SCALE GENOMIC DNA]</scope>
    <source>
        <strain>DSM 44385 / JCM 11950 / CIP 105744 / CCUG 35717</strain>
    </source>
</reference>